<proteinExistence type="inferred from homology"/>
<protein>
    <recommendedName>
        <fullName evidence="2">ESAT-6-like protein SAG0230</fullName>
    </recommendedName>
</protein>
<feature type="chain" id="PRO_0000437934" description="ESAT-6-like protein SAG0230">
    <location>
        <begin position="1"/>
        <end position="96"/>
    </location>
</feature>
<dbReference type="EMBL" id="AE009948">
    <property type="protein sequence ID" value="AAM99137.1"/>
    <property type="molecule type" value="Genomic_DNA"/>
</dbReference>
<dbReference type="RefSeq" id="NP_687265.1">
    <property type="nucleotide sequence ID" value="NC_004116.1"/>
</dbReference>
<dbReference type="RefSeq" id="WP_000078283.1">
    <property type="nucleotide sequence ID" value="NC_004116.1"/>
</dbReference>
<dbReference type="SMR" id="Q8E1X1"/>
<dbReference type="STRING" id="208435.SAG0230"/>
<dbReference type="KEGG" id="sag:SAG0230"/>
<dbReference type="PATRIC" id="fig|208435.3.peg.228"/>
<dbReference type="HOGENOM" id="CLU_158563_4_0_9"/>
<dbReference type="OrthoDB" id="4978934at2"/>
<dbReference type="Proteomes" id="UP000000821">
    <property type="component" value="Chromosome"/>
</dbReference>
<dbReference type="Gene3D" id="1.10.287.1060">
    <property type="entry name" value="ESAT-6-like"/>
    <property type="match status" value="1"/>
</dbReference>
<dbReference type="InterPro" id="IPR036689">
    <property type="entry name" value="ESAT-6-like_sf"/>
</dbReference>
<dbReference type="InterPro" id="IPR010310">
    <property type="entry name" value="T7SS_ESAT-6-like"/>
</dbReference>
<dbReference type="NCBIfam" id="TIGR03930">
    <property type="entry name" value="WXG100_ESAT6"/>
    <property type="match status" value="1"/>
</dbReference>
<dbReference type="Pfam" id="PF06013">
    <property type="entry name" value="WXG100"/>
    <property type="match status" value="1"/>
</dbReference>
<dbReference type="SUPFAM" id="SSF140453">
    <property type="entry name" value="EsxAB dimer-like"/>
    <property type="match status" value="1"/>
</dbReference>
<accession>Q8E1X1</accession>
<evidence type="ECO:0000250" key="1">
    <source>
        <dbReference type="UniProtKB" id="Q8DZR0"/>
    </source>
</evidence>
<evidence type="ECO:0000305" key="2"/>
<evidence type="ECO:0000305" key="3">
    <source>
    </source>
</evidence>
<name>ESX1_STRA5</name>
<comment type="subunit">
    <text evidence="1">Homodimer (By similarity).</text>
</comment>
<comment type="similarity">
    <text evidence="3">Belongs to the WXG100 family. sagEsxA-like subfamily.</text>
</comment>
<sequence length="96" mass="10763">MSQIKLTPEELRISAQKYTTGSQSITDVLTVLTQEQAVIDENWDGTAFDSFEAQFNELSPKITQFAQLLEDINQQLLKVADVVEQTDSDIASQINK</sequence>
<reference key="1">
    <citation type="journal article" date="2002" name="Proc. Natl. Acad. Sci. U.S.A.">
        <title>Complete genome sequence and comparative genomic analysis of an emerging human pathogen, serotype V Streptococcus agalactiae.</title>
        <authorList>
            <person name="Tettelin H."/>
            <person name="Masignani V."/>
            <person name="Cieslewicz M.J."/>
            <person name="Eisen J.A."/>
            <person name="Peterson S.N."/>
            <person name="Wessels M.R."/>
            <person name="Paulsen I.T."/>
            <person name="Nelson K.E."/>
            <person name="Margarit I."/>
            <person name="Read T.D."/>
            <person name="Madoff L.C."/>
            <person name="Wolf A.M."/>
            <person name="Beanan M.J."/>
            <person name="Brinkac L.M."/>
            <person name="Daugherty S.C."/>
            <person name="DeBoy R.T."/>
            <person name="Durkin A.S."/>
            <person name="Kolonay J.F."/>
            <person name="Madupu R."/>
            <person name="Lewis M.R."/>
            <person name="Radune D."/>
            <person name="Fedorova N.B."/>
            <person name="Scanlan D."/>
            <person name="Khouri H.M."/>
            <person name="Mulligan S."/>
            <person name="Carty H.A."/>
            <person name="Cline R.T."/>
            <person name="Van Aken S.E."/>
            <person name="Gill J."/>
            <person name="Scarselli M."/>
            <person name="Mora M."/>
            <person name="Iacobini E.T."/>
            <person name="Brettoni C."/>
            <person name="Galli G."/>
            <person name="Mariani M."/>
            <person name="Vegni F."/>
            <person name="Maione D."/>
            <person name="Rinaudo D."/>
            <person name="Rappuoli R."/>
            <person name="Telford J.L."/>
            <person name="Kasper D.L."/>
            <person name="Grandi G."/>
            <person name="Fraser C.M."/>
        </authorList>
    </citation>
    <scope>NUCLEOTIDE SEQUENCE [LARGE SCALE GENOMIC DNA]</scope>
    <source>
        <strain>ATCC BAA-611 / 2603 V/R</strain>
    </source>
</reference>
<reference key="2">
    <citation type="journal article" date="2014" name="PLoS ONE">
        <title>WXG100 protein superfamily consists of three subfamilies and exhibits an alpha-helical C-terminal conserved residue pattern.</title>
        <authorList>
            <person name="Poulsen C."/>
            <person name="Panjikar S."/>
            <person name="Holton S.J."/>
            <person name="Wilmanns M."/>
            <person name="Song Y.H."/>
        </authorList>
    </citation>
    <scope>DISCUSSION OF SEQUENCE</scope>
    <source>
        <strain>ATCC BAA-611 / 2603 V/R</strain>
    </source>
</reference>
<organism>
    <name type="scientific">Streptococcus agalactiae serotype V (strain ATCC BAA-611 / 2603 V/R)</name>
    <dbReference type="NCBI Taxonomy" id="208435"/>
    <lineage>
        <taxon>Bacteria</taxon>
        <taxon>Bacillati</taxon>
        <taxon>Bacillota</taxon>
        <taxon>Bacilli</taxon>
        <taxon>Lactobacillales</taxon>
        <taxon>Streptococcaceae</taxon>
        <taxon>Streptococcus</taxon>
    </lineage>
</organism>
<keyword id="KW-1185">Reference proteome</keyword>
<gene>
    <name type="ordered locus">SAG0230</name>
</gene>